<gene>
    <name evidence="8" type="primary">pgsA1</name>
    <name evidence="8" type="ordered locus">BCG_2637c</name>
</gene>
<sequence length="217" mass="23252">MSKLPFLSRAAFARITTPIARGLLRVGLTPDVVTILGTTASVAGALTLFPMGKLFAGACVVWFFVLFDMLDGAMARERGGGTRFGAVLDATCDRISDGAVFCGLLWWIAFHMRDRPLVIATLICLVTSQVISYIKARAEASGLRGDGGFIERPERLIIVLTGAGVSDFPFVPWPPALSVGMWLLAVASVITCVQRLHTVWTSPGAIDRMAIPGKGDR</sequence>
<organism>
    <name type="scientific">Mycobacterium bovis (strain BCG / Pasteur 1173P2)</name>
    <dbReference type="NCBI Taxonomy" id="410289"/>
    <lineage>
        <taxon>Bacteria</taxon>
        <taxon>Bacillati</taxon>
        <taxon>Actinomycetota</taxon>
        <taxon>Actinomycetes</taxon>
        <taxon>Mycobacteriales</taxon>
        <taxon>Mycobacteriaceae</taxon>
        <taxon>Mycobacterium</taxon>
        <taxon>Mycobacterium tuberculosis complex</taxon>
    </lineage>
</organism>
<dbReference type="EC" id="2.7.8.-" evidence="4 5"/>
<dbReference type="EMBL" id="AM408590">
    <property type="protein sequence ID" value="CAL72625.1"/>
    <property type="molecule type" value="Genomic_DNA"/>
</dbReference>
<dbReference type="RefSeq" id="WP_003413482.1">
    <property type="nucleotide sequence ID" value="NC_008769.1"/>
</dbReference>
<dbReference type="SMR" id="A0A0H3MFZ3"/>
<dbReference type="KEGG" id="mbb:BCG_2637c"/>
<dbReference type="HOGENOM" id="CLU_080384_0_1_11"/>
<dbReference type="BRENDA" id="2.7.8.B13">
    <property type="organism ID" value="3494"/>
</dbReference>
<dbReference type="UniPathway" id="UPA00220"/>
<dbReference type="Proteomes" id="UP000001472">
    <property type="component" value="Chromosome"/>
</dbReference>
<dbReference type="GO" id="GO:0005886">
    <property type="term" value="C:plasma membrane"/>
    <property type="evidence" value="ECO:0007669"/>
    <property type="project" value="UniProtKB-SubCell"/>
</dbReference>
<dbReference type="GO" id="GO:0000287">
    <property type="term" value="F:magnesium ion binding"/>
    <property type="evidence" value="ECO:0007669"/>
    <property type="project" value="UniProtKB-UniRule"/>
</dbReference>
<dbReference type="GO" id="GO:0016780">
    <property type="term" value="F:phosphotransferase activity, for other substituted phosphate groups"/>
    <property type="evidence" value="ECO:0007669"/>
    <property type="project" value="UniProtKB-UniRule"/>
</dbReference>
<dbReference type="GO" id="GO:0008654">
    <property type="term" value="P:phospholipid biosynthetic process"/>
    <property type="evidence" value="ECO:0007669"/>
    <property type="project" value="UniProtKB-UniRule"/>
</dbReference>
<dbReference type="FunFam" id="1.20.120.1760:FF:000024">
    <property type="entry name" value="Probable phosphatidylinositol synthase pgsA1"/>
    <property type="match status" value="1"/>
</dbReference>
<dbReference type="Gene3D" id="1.20.120.1760">
    <property type="match status" value="1"/>
</dbReference>
<dbReference type="HAMAP" id="MF_02241">
    <property type="entry name" value="PIP_synthase"/>
    <property type="match status" value="1"/>
</dbReference>
<dbReference type="InterPro" id="IPR000462">
    <property type="entry name" value="CDP-OH_P_trans"/>
</dbReference>
<dbReference type="InterPro" id="IPR043130">
    <property type="entry name" value="CDP-OH_PTrfase_TM_dom"/>
</dbReference>
<dbReference type="InterPro" id="IPR048254">
    <property type="entry name" value="CDP_ALCOHOL_P_TRANSF_CS"/>
</dbReference>
<dbReference type="InterPro" id="IPR044268">
    <property type="entry name" value="PIP_synthase_PgsA1"/>
</dbReference>
<dbReference type="NCBIfam" id="NF045883">
    <property type="entry name" value="PIPSynth"/>
    <property type="match status" value="1"/>
</dbReference>
<dbReference type="Pfam" id="PF01066">
    <property type="entry name" value="CDP-OH_P_transf"/>
    <property type="match status" value="1"/>
</dbReference>
<dbReference type="PROSITE" id="PS00379">
    <property type="entry name" value="CDP_ALCOHOL_P_TRANSF"/>
    <property type="match status" value="1"/>
</dbReference>
<accession>A0A0H3MFZ3</accession>
<proteinExistence type="evidence at protein level"/>
<comment type="function">
    <text evidence="4 5">Catalyzes the conjugation of the 1'-hydroxyl group of D-myo-inositol-3-phosphate (also named L-myo-inositol-1-phosphate) with a lipid tail of cytidine diphosphate diacylglycerol (CDP-DAG), forming phosphatidylinositol phosphate (PIP) and CMP. PIP is a precursor of phosphatidylinositol (PI) which is an essential lipid for mycobacteria required for formation of their cell wall.</text>
</comment>
<comment type="catalytic activity">
    <reaction evidence="4 5">
        <text>a CDP-1,2-diacyl-sn-glycerol + 1D-myo-inositol 3-phosphate = a 1,2-diacyl-sn-glycero-3-phospho-(1D-myo-inositol-3-phosphate) + CMP + H(+)</text>
        <dbReference type="Rhea" id="RHEA:60504"/>
        <dbReference type="ChEBI" id="CHEBI:15378"/>
        <dbReference type="ChEBI" id="CHEBI:58088"/>
        <dbReference type="ChEBI" id="CHEBI:58332"/>
        <dbReference type="ChEBI" id="CHEBI:58401"/>
        <dbReference type="ChEBI" id="CHEBI:60377"/>
    </reaction>
</comment>
<comment type="catalytic activity">
    <reaction evidence="4 5">
        <text>1,2-di-(9Z-octadecenoyl)-sn-glycero-3-cytidine-5'-diphosphate + 1D-myo-inositol 3-phosphate = 1,2-di-(9Z-octadecenoyl)-sn-glycero-3-phospho-(1D-myo-inositol-3-phosphate) + CMP + H(+)</text>
        <dbReference type="Rhea" id="RHEA:61216"/>
        <dbReference type="ChEBI" id="CHEBI:15378"/>
        <dbReference type="ChEBI" id="CHEBI:58401"/>
        <dbReference type="ChEBI" id="CHEBI:60377"/>
        <dbReference type="ChEBI" id="CHEBI:85356"/>
        <dbReference type="ChEBI" id="CHEBI:144472"/>
    </reaction>
</comment>
<comment type="cofactor">
    <cofactor evidence="5">
        <name>Mg(2+)</name>
        <dbReference type="ChEBI" id="CHEBI:18420"/>
    </cofactor>
    <text evidence="1">Contains a di-nuclear catalytic Mg(2+) center.</text>
</comment>
<comment type="activity regulation">
    <text evidence="5">Competitively inhibited by several inositol 1-phosphate analogs, including the phosphonate analog 1-deoxy-1-phosphonomethyl-myo-inositol (Ino-C-P).</text>
</comment>
<comment type="biophysicochemical properties">
    <phDependence>
        <text evidence="5">Optimum pH is 8.5.</text>
    </phDependence>
</comment>
<comment type="pathway">
    <text evidence="4">Phospholipid metabolism; phosphatidylinositol phosphate biosynthesis.</text>
</comment>
<comment type="subunit">
    <text evidence="1">Homodimer.</text>
</comment>
<comment type="subcellular location">
    <subcellularLocation>
        <location evidence="5">Cell membrane</location>
        <topology evidence="2">Multi-pass membrane protein</topology>
    </subcellularLocation>
</comment>
<comment type="similarity">
    <text evidence="3 7">Belongs to the CDP-alcohol phosphatidyltransferase class-I family.</text>
</comment>
<protein>
    <recommendedName>
        <fullName evidence="6">Phosphatidylinositol phosphate synthase</fullName>
        <shortName evidence="6">PIP synthase</shortName>
        <ecNumber evidence="4 5">2.7.8.-</ecNumber>
    </recommendedName>
    <alternativeName>
        <fullName>CDP-diacylglycerol--D-myo-inositol-3-phosphate 3-phosphatidyltransferase</fullName>
    </alternativeName>
</protein>
<reference key="1">
    <citation type="journal article" date="2007" name="Proc. Natl. Acad. Sci. U.S.A.">
        <title>Genome plasticity of BCG and impact on vaccine efficacy.</title>
        <authorList>
            <person name="Brosch R."/>
            <person name="Gordon S.V."/>
            <person name="Garnier T."/>
            <person name="Eiglmeier K."/>
            <person name="Frigui W."/>
            <person name="Valenti P."/>
            <person name="Dos Santos S."/>
            <person name="Duthoy S."/>
            <person name="Lacroix C."/>
            <person name="Garcia-Pelayo C."/>
            <person name="Inwald J.K."/>
            <person name="Golby P."/>
            <person name="Garcia J.N."/>
            <person name="Hewinson R.G."/>
            <person name="Behr M.A."/>
            <person name="Quail M.A."/>
            <person name="Churcher C."/>
            <person name="Barrell B.G."/>
            <person name="Parkhill J."/>
            <person name="Cole S.T."/>
        </authorList>
    </citation>
    <scope>NUCLEOTIDE SEQUENCE [LARGE SCALE GENOMIC DNA]</scope>
    <source>
        <strain>BCG / Pasteur 1173P2</strain>
    </source>
</reference>
<reference key="2">
    <citation type="journal article" date="2010" name="J. Biochem.">
        <title>A revised biosynthetic pathway for phosphatidylinositol in Mycobacteria.</title>
        <authorList>
            <person name="Morii H."/>
            <person name="Ogawa M."/>
            <person name="Fukuda K."/>
            <person name="Taniguchi H."/>
            <person name="Koga Y."/>
        </authorList>
    </citation>
    <scope>FUNCTION</scope>
    <scope>CATALYTIC ACTIVITY</scope>
    <scope>PATHWAY</scope>
    <source>
        <strain>BCG</strain>
    </source>
</reference>
<reference key="3">
    <citation type="journal article" date="2013" name="J. Biochem.">
        <title>Studies of inositol 1-phosphate analogues as inhibitors of the phosphatidylinositol phosphate synthase in mycobacteria.</title>
        <authorList>
            <person name="Morii H."/>
            <person name="Okauchi T."/>
            <person name="Nomiya H."/>
            <person name="Ogawa M."/>
            <person name="Fukuda K."/>
            <person name="Taniguchi H."/>
        </authorList>
    </citation>
    <scope>FUNCTION</scope>
    <scope>CATALYTIC ACTIVITY</scope>
    <scope>COFACTOR</scope>
    <scope>ACTIVITY REGULATION</scope>
    <scope>SUBCELLULAR LOCATION</scope>
</reference>
<evidence type="ECO:0000250" key="1">
    <source>
        <dbReference type="UniProtKB" id="P9WPG7"/>
    </source>
</evidence>
<evidence type="ECO:0000255" key="2"/>
<evidence type="ECO:0000255" key="3">
    <source>
        <dbReference type="HAMAP-Rule" id="MF_02241"/>
    </source>
</evidence>
<evidence type="ECO:0000269" key="4">
    <source>
    </source>
</evidence>
<evidence type="ECO:0000269" key="5">
    <source>
    </source>
</evidence>
<evidence type="ECO:0000303" key="6">
    <source>
    </source>
</evidence>
<evidence type="ECO:0000305" key="7"/>
<evidence type="ECO:0000312" key="8">
    <source>
        <dbReference type="EMBL" id="CAL72625.1"/>
    </source>
</evidence>
<keyword id="KW-1003">Cell membrane</keyword>
<keyword id="KW-0460">Magnesium</keyword>
<keyword id="KW-0472">Membrane</keyword>
<keyword id="KW-0479">Metal-binding</keyword>
<keyword id="KW-0808">Transferase</keyword>
<keyword id="KW-0812">Transmembrane</keyword>
<keyword id="KW-1133">Transmembrane helix</keyword>
<feature type="chain" id="PRO_0000448359" description="Phosphatidylinositol phosphate synthase">
    <location>
        <begin position="1"/>
        <end position="217"/>
    </location>
</feature>
<feature type="transmembrane region" description="Helical" evidence="2">
    <location>
        <begin position="28"/>
        <end position="49"/>
    </location>
</feature>
<feature type="transmembrane region" description="Helical" evidence="2">
    <location>
        <begin position="55"/>
        <end position="74"/>
    </location>
</feature>
<feature type="transmembrane region" description="Helical" evidence="2">
    <location>
        <begin position="95"/>
        <end position="112"/>
    </location>
</feature>
<feature type="transmembrane region" description="Helical" evidence="2">
    <location>
        <begin position="118"/>
        <end position="136"/>
    </location>
</feature>
<feature type="transmembrane region" description="Helical" evidence="2">
    <location>
        <begin position="156"/>
        <end position="173"/>
    </location>
</feature>
<feature type="transmembrane region" description="Helical" evidence="2">
    <location>
        <begin position="179"/>
        <end position="200"/>
    </location>
</feature>
<feature type="active site" description="Proton acceptor" evidence="1">
    <location>
        <position position="93"/>
    </location>
</feature>
<feature type="binding site" evidence="1">
    <location>
        <begin position="31"/>
        <end position="34"/>
    </location>
    <ligand>
        <name>a CDP-1,2-diacyl-sn-glycerol</name>
        <dbReference type="ChEBI" id="CHEBI:58332"/>
    </ligand>
</feature>
<feature type="binding site" evidence="1">
    <location>
        <position position="68"/>
    </location>
    <ligand>
        <name>Mg(2+)</name>
        <dbReference type="ChEBI" id="CHEBI:18420"/>
        <label>1</label>
    </ligand>
</feature>
<feature type="binding site" evidence="1">
    <location>
        <position position="68"/>
    </location>
    <ligand>
        <name>Mg(2+)</name>
        <dbReference type="ChEBI" id="CHEBI:18420"/>
        <label>2</label>
    </ligand>
</feature>
<feature type="binding site" evidence="1">
    <location>
        <position position="71"/>
    </location>
    <ligand>
        <name>Mg(2+)</name>
        <dbReference type="ChEBI" id="CHEBI:18420"/>
        <label>1</label>
    </ligand>
</feature>
<feature type="binding site" evidence="1">
    <location>
        <position position="72"/>
    </location>
    <ligand>
        <name>a CDP-1,2-diacyl-sn-glycerol</name>
        <dbReference type="ChEBI" id="CHEBI:58332"/>
    </ligand>
</feature>
<feature type="binding site" evidence="1">
    <location>
        <position position="76"/>
    </location>
    <ligand>
        <name>a CDP-1,2-diacyl-sn-glycerol</name>
        <dbReference type="ChEBI" id="CHEBI:58332"/>
    </ligand>
</feature>
<feature type="binding site" evidence="1">
    <location>
        <position position="82"/>
    </location>
    <ligand>
        <name>a CDP-1,2-diacyl-sn-glycerol</name>
        <dbReference type="ChEBI" id="CHEBI:58332"/>
    </ligand>
</feature>
<feature type="binding site" evidence="1">
    <location>
        <position position="89"/>
    </location>
    <ligand>
        <name>Mg(2+)</name>
        <dbReference type="ChEBI" id="CHEBI:18420"/>
        <label>1</label>
    </ligand>
</feature>
<feature type="binding site" evidence="1">
    <location>
        <position position="89"/>
    </location>
    <ligand>
        <name>Mg(2+)</name>
        <dbReference type="ChEBI" id="CHEBI:18420"/>
        <label>2</label>
    </ligand>
</feature>
<feature type="binding site" evidence="1">
    <location>
        <position position="93"/>
    </location>
    <ligand>
        <name>Mg(2+)</name>
        <dbReference type="ChEBI" id="CHEBI:18420"/>
        <label>2</label>
    </ligand>
</feature>
<name>PIPS_MYCBP</name>